<keyword id="KW-0106">Calcium</keyword>
<keyword id="KW-0274">FAD</keyword>
<keyword id="KW-0285">Flavoprotein</keyword>
<keyword id="KW-0472">Membrane</keyword>
<keyword id="KW-0479">Metal-binding</keyword>
<keyword id="KW-0521">NADP</keyword>
<keyword id="KW-0560">Oxidoreductase</keyword>
<keyword id="KW-0575">Peroxidase</keyword>
<keyword id="KW-0597">Phosphoprotein</keyword>
<keyword id="KW-0611">Plant defense</keyword>
<keyword id="KW-1185">Reference proteome</keyword>
<keyword id="KW-0677">Repeat</keyword>
<keyword id="KW-0812">Transmembrane</keyword>
<keyword id="KW-1133">Transmembrane helix</keyword>
<organism>
    <name type="scientific">Arabidopsis thaliana</name>
    <name type="common">Mouse-ear cress</name>
    <dbReference type="NCBI Taxonomy" id="3702"/>
    <lineage>
        <taxon>Eukaryota</taxon>
        <taxon>Viridiplantae</taxon>
        <taxon>Streptophyta</taxon>
        <taxon>Embryophyta</taxon>
        <taxon>Tracheophyta</taxon>
        <taxon>Spermatophyta</taxon>
        <taxon>Magnoliopsida</taxon>
        <taxon>eudicotyledons</taxon>
        <taxon>Gunneridae</taxon>
        <taxon>Pentapetalae</taxon>
        <taxon>rosids</taxon>
        <taxon>malvids</taxon>
        <taxon>Brassicales</taxon>
        <taxon>Brassicaceae</taxon>
        <taxon>Camelineae</taxon>
        <taxon>Arabidopsis</taxon>
    </lineage>
</organism>
<sequence length="921" mass="103909">MKMRRGNSSNDHELGILRGANSDTNSDTESIASDRGAFSGPLGRPKRASKKNARFADDLPKRSNSVAGGRGDDDEYVEITLDIRDDSVAVHSVQQAAGGGGHLEDPELALLTKKTLESSLNNTTSLSFFRSTSSRIKNASRELRRVFSRRPSPAVRRFDRTSSAAIHALKGLKFIATKTAAWPAVDQRFDKLSADSNGLLLSAKFWECLGMNKESKDFADQLFRALARRNNVSGDAITKEQLRIFWEQISDESFDAKLQVFFDMVDKDEDGRVTEEEVAEIISLSASANKLSNIQKQAKEYAALIMEELDPDNAGFIMIENLEMLLLQAPNQSVRMGDSRILSQMLSQKLRPAKESNPLVRWSEKIKYFILDNWQRLWIMMLWLGICGGLFTYKFIQYKNKAAYGVMGYCVCVAKGGAETLKFNMALILLPVCRNTITWLRNKTKLGTVVPFDDSLNFHKVIASGIVVGVLLHAGAHLTCDFPRLIAADEDTYEPMEKYFGDQPTSYWWFVKGVEGWTGIVMVVLMAIAFTLATPWFRRNKLNLPNFLKKLTGFNAFWYTHHLFIIVYALLIVHGIKLYLTKIWYQKTTWMYLAVPILLYASERLLRAFRSSIKPVKMIKVAVYPGNVLSLHMTKPQGFKYKSGQFMLVNCRAVSPFEWHPFSITSAPGDDYLSVHIRTLGDWTRKLRTVFSEVCKPPTAGKSGLLRADGGDGNLPFPKVLIDGPYGAPAQDYKKYDVVLLVGLGIGATPMISILKDIINNMKGPDRDSDIENNNSNNNSKGFKTRKAYFYWVTREQGSFEWFKGIMDEISELDEEGIIELHNYCTSVYEEGDARVALIAMLQSLQHAKNGVDVVSGTRVKSHFAKPNWRQVYKKIAVQHPGKRIGVFYCGMPGMIKELKNLALDFSRKTTTKFDFHKENF</sequence>
<accession>Q9FIJ0</accession>
<accession>O81212</accession>
<evidence type="ECO:0000250" key="1"/>
<evidence type="ECO:0000255" key="2"/>
<evidence type="ECO:0000255" key="3">
    <source>
        <dbReference type="PROSITE-ProRule" id="PRU00448"/>
    </source>
</evidence>
<evidence type="ECO:0000255" key="4">
    <source>
        <dbReference type="PROSITE-ProRule" id="PRU00716"/>
    </source>
</evidence>
<evidence type="ECO:0000256" key="5">
    <source>
        <dbReference type="SAM" id="MobiDB-lite"/>
    </source>
</evidence>
<evidence type="ECO:0000269" key="6">
    <source>
    </source>
</evidence>
<evidence type="ECO:0000269" key="7">
    <source>
    </source>
</evidence>
<evidence type="ECO:0000269" key="8">
    <source>
    </source>
</evidence>
<evidence type="ECO:0000269" key="9">
    <source>
    </source>
</evidence>
<evidence type="ECO:0000269" key="10">
    <source>
    </source>
</evidence>
<evidence type="ECO:0000269" key="11">
    <source>
    </source>
</evidence>
<evidence type="ECO:0000269" key="12">
    <source>
    </source>
</evidence>
<evidence type="ECO:0000269" key="13">
    <source>
    </source>
</evidence>
<evidence type="ECO:0000269" key="14">
    <source>
    </source>
</evidence>
<evidence type="ECO:0000269" key="15">
    <source>
    </source>
</evidence>
<evidence type="ECO:0000303" key="16">
    <source>
    </source>
</evidence>
<evidence type="ECO:0000305" key="17"/>
<evidence type="ECO:0000312" key="18">
    <source>
        <dbReference type="Araport" id="AT5G47910"/>
    </source>
</evidence>
<evidence type="ECO:0000312" key="19">
    <source>
        <dbReference type="EMBL" id="BAB11338.1"/>
    </source>
</evidence>
<evidence type="ECO:0007744" key="20">
    <source>
    </source>
</evidence>
<evidence type="ECO:0007744" key="21">
    <source>
    </source>
</evidence>
<evidence type="ECO:0007744" key="22">
    <source>
    </source>
</evidence>
<reference key="1">
    <citation type="journal article" date="1998" name="Plant J.">
        <title>Six Arabidopsis thaliana homologues of the human respiratory burst oxidase (gp91phox).</title>
        <authorList>
            <person name="Torres M.A."/>
            <person name="Onouchi H."/>
            <person name="Hamada S."/>
            <person name="Machida C."/>
            <person name="Hammond-Kosack K.E."/>
            <person name="Jones J.D.G."/>
        </authorList>
    </citation>
    <scope>NUCLEOTIDE SEQUENCE [MRNA]</scope>
    <scope>TISSUE SPECIFICITY</scope>
    <source>
        <strain>cv. Landsberg erecta</strain>
    </source>
</reference>
<reference key="2">
    <citation type="journal article" date="1998" name="DNA Res.">
        <title>Structural analysis of Arabidopsis thaliana chromosome 5. VIII. Sequence features of the regions of 1,081,958 bp covered by seventeen physically assigned P1 and TAC clones.</title>
        <authorList>
            <person name="Asamizu E."/>
            <person name="Sato S."/>
            <person name="Kaneko T."/>
            <person name="Nakamura Y."/>
            <person name="Kotani H."/>
            <person name="Miyajima N."/>
            <person name="Tabata S."/>
        </authorList>
    </citation>
    <scope>NUCLEOTIDE SEQUENCE [LARGE SCALE GENOMIC DNA]</scope>
    <source>
        <strain>cv. Columbia</strain>
    </source>
</reference>
<reference key="3">
    <citation type="journal article" date="2017" name="Plant J.">
        <title>Araport11: a complete reannotation of the Arabidopsis thaliana reference genome.</title>
        <authorList>
            <person name="Cheng C.Y."/>
            <person name="Krishnakumar V."/>
            <person name="Chan A.P."/>
            <person name="Thibaud-Nissen F."/>
            <person name="Schobel S."/>
            <person name="Town C.D."/>
        </authorList>
    </citation>
    <scope>GENOME REANNOTATION</scope>
    <source>
        <strain>cv. Columbia</strain>
    </source>
</reference>
<reference key="4">
    <citation type="journal article" date="2003" name="Science">
        <title>Empirical analysis of transcriptional activity in the Arabidopsis genome.</title>
        <authorList>
            <person name="Yamada K."/>
            <person name="Lim J."/>
            <person name="Dale J.M."/>
            <person name="Chen H."/>
            <person name="Shinn P."/>
            <person name="Palm C.J."/>
            <person name="Southwick A.M."/>
            <person name="Wu H.C."/>
            <person name="Kim C.J."/>
            <person name="Nguyen M."/>
            <person name="Pham P.K."/>
            <person name="Cheuk R.F."/>
            <person name="Karlin-Newmann G."/>
            <person name="Liu S.X."/>
            <person name="Lam B."/>
            <person name="Sakano H."/>
            <person name="Wu T."/>
            <person name="Yu G."/>
            <person name="Miranda M."/>
            <person name="Quach H.L."/>
            <person name="Tripp M."/>
            <person name="Chang C.H."/>
            <person name="Lee J.M."/>
            <person name="Toriumi M.J."/>
            <person name="Chan M.M."/>
            <person name="Tang C.C."/>
            <person name="Onodera C.S."/>
            <person name="Deng J.M."/>
            <person name="Akiyama K."/>
            <person name="Ansari Y."/>
            <person name="Arakawa T."/>
            <person name="Banh J."/>
            <person name="Banno F."/>
            <person name="Bowser L."/>
            <person name="Brooks S.Y."/>
            <person name="Carninci P."/>
            <person name="Chao Q."/>
            <person name="Choy N."/>
            <person name="Enju A."/>
            <person name="Goldsmith A.D."/>
            <person name="Gurjal M."/>
            <person name="Hansen N.F."/>
            <person name="Hayashizaki Y."/>
            <person name="Johnson-Hopson C."/>
            <person name="Hsuan V.W."/>
            <person name="Iida K."/>
            <person name="Karnes M."/>
            <person name="Khan S."/>
            <person name="Koesema E."/>
            <person name="Ishida J."/>
            <person name="Jiang P.X."/>
            <person name="Jones T."/>
            <person name="Kawai J."/>
            <person name="Kamiya A."/>
            <person name="Meyers C."/>
            <person name="Nakajima M."/>
            <person name="Narusaka M."/>
            <person name="Seki M."/>
            <person name="Sakurai T."/>
            <person name="Satou M."/>
            <person name="Tamse R."/>
            <person name="Vaysberg M."/>
            <person name="Wallender E.K."/>
            <person name="Wong C."/>
            <person name="Yamamura Y."/>
            <person name="Yuan S."/>
            <person name="Shinozaki K."/>
            <person name="Davis R.W."/>
            <person name="Theologis A."/>
            <person name="Ecker J.R."/>
        </authorList>
    </citation>
    <scope>NUCLEOTIDE SEQUENCE [LARGE SCALE MRNA]</scope>
    <source>
        <strain>cv. Columbia</strain>
    </source>
</reference>
<reference key="5">
    <citation type="journal article" date="2002" name="Proc. Natl. Acad. Sci. U.S.A.">
        <title>Arabidopsis gp91phox homologues AtrbohD and AtrbohF are required for accumulation of reactive oxygen intermediates in the plant defense response.</title>
        <authorList>
            <person name="Torres M.A."/>
            <person name="Dangl J.L."/>
            <person name="Jones J.D.G."/>
        </authorList>
    </citation>
    <scope>FUNCTION</scope>
</reference>
<reference key="6">
    <citation type="journal article" date="2003" name="EMBO J.">
        <title>NADPH oxidase AtrbohD and AtrbohF genes function in ROS-dependent ABA signaling in Arabidopsis.</title>
        <authorList>
            <person name="Kwak J.M."/>
            <person name="Mori I.C."/>
            <person name="Pei Z.-M."/>
            <person name="Leonhardt N."/>
            <person name="Torres M.A."/>
            <person name="Dangl J.L."/>
            <person name="Bloom R.E."/>
            <person name="Bodde S."/>
            <person name="Jones J.D.G."/>
            <person name="Schroeder J.I."/>
        </authorList>
    </citation>
    <scope>FUNCTION</scope>
    <scope>INDUCTION BY ABSCISIC ACID</scope>
    <scope>TISSUE SPECIFICITY</scope>
</reference>
<reference key="7">
    <citation type="journal article" date="2005" name="Plant Cell">
        <title>Cytosolic ascorbate peroxidase 1 is a central component of the reactive oxygen gene network of Arabidopsis.</title>
        <authorList>
            <person name="Davletova S."/>
            <person name="Rizhsky L."/>
            <person name="Liang H."/>
            <person name="Shengqiang Z."/>
            <person name="Oliver D.J."/>
            <person name="Coutu J."/>
            <person name="Shulaev V."/>
            <person name="Schlauch K."/>
            <person name="Mittler R."/>
        </authorList>
    </citation>
    <scope>FUNCTION</scope>
    <scope>DISRUPTION PHENOTYPE</scope>
</reference>
<reference key="8">
    <citation type="journal article" date="2006" name="Plant Cell Environ.">
        <title>The role of NADPH oxidase and MAP kinase phosphatase in UV-B-dependent gene expression in Arabidopsis.</title>
        <authorList>
            <person name="Kalbina I."/>
            <person name="Strid A."/>
        </authorList>
    </citation>
    <scope>FUNCTION</scope>
</reference>
<reference key="9">
    <citation type="journal article" date="2006" name="Plant Physiol.">
        <title>Extracellular ATP induces the accumulation of superoxide via NADPH oxidases in Arabidopsis.</title>
        <authorList>
            <person name="Song C.J."/>
            <person name="Steinebrunner I."/>
            <person name="Wang X."/>
            <person name="Stout S.C."/>
            <person name="Roux S.J."/>
        </authorList>
    </citation>
    <scope>FUNCTION</scope>
</reference>
<reference key="10">
    <citation type="journal article" date="2006" name="Plant Physiol.">
        <title>Production of reactive oxygen species by plant NADPH oxidases.</title>
        <authorList>
            <person name="Sagi M."/>
            <person name="Fluhr R."/>
        </authorList>
    </citation>
    <scope>GENE FAMILY</scope>
    <scope>NOMENCLATURE</scope>
</reference>
<reference key="11">
    <citation type="journal article" date="2007" name="Mol. Plant Microbe Interact.">
        <title>Arabidopsis thaliana expresses multiple lines of defense to counterattack Erwinia chrysanthemi.</title>
        <authorList>
            <person name="Fagard M."/>
            <person name="Dellagi A."/>
            <person name="Roux C."/>
            <person name="Perino C."/>
            <person name="Rigault M."/>
            <person name="Boucher V."/>
            <person name="Shevchik V.E."/>
            <person name="Expert D."/>
        </authorList>
    </citation>
    <scope>FUNCTION</scope>
    <scope>ACTIVITY REGULATION</scope>
    <scope>INDUCTION</scope>
</reference>
<reference key="12">
    <citation type="journal article" date="2007" name="Plant J.">
        <title>Quantitative phosphoproteomic analysis of plasma membrane proteins reveals regulatory mechanisms of plant innate immune responses.</title>
        <authorList>
            <person name="Nuehse T.S."/>
            <person name="Bottrill A.R."/>
            <person name="Jones A.M."/>
            <person name="Peck S.C."/>
        </authorList>
    </citation>
    <scope>PHOSPHORYLATION [LARGE SCALE ANALYSIS] AT SER-26; SER-343 AND SER-347</scope>
    <scope>IDENTIFICATION BY MASS SPECTROMETRY [LARGE SCALE ANALYSIS]</scope>
    <source>
        <strain>cv. La-0</strain>
    </source>
</reference>
<reference key="13">
    <citation type="journal article" date="2009" name="J. Proteomics">
        <title>Phosphoproteomic analysis of nuclei-enriched fractions from Arabidopsis thaliana.</title>
        <authorList>
            <person name="Jones A.M.E."/>
            <person name="MacLean D."/>
            <person name="Studholme D.J."/>
            <person name="Serna-Sanz A."/>
            <person name="Andreasson E."/>
            <person name="Rathjen J.P."/>
            <person name="Peck S.C."/>
        </authorList>
    </citation>
    <scope>PHOSPHORYLATION [LARGE SCALE ANALYSIS] AT SER-39</scope>
    <scope>IDENTIFICATION BY MASS SPECTROMETRY [LARGE SCALE ANALYSIS]</scope>
    <source>
        <strain>cv. Columbia</strain>
    </source>
</reference>
<reference key="14">
    <citation type="journal article" date="2009" name="Plant Physiol.">
        <title>Large-scale Arabidopsis phosphoproteome profiling reveals novel chloroplast kinase substrates and phosphorylation networks.</title>
        <authorList>
            <person name="Reiland S."/>
            <person name="Messerli G."/>
            <person name="Baerenfaller K."/>
            <person name="Gerrits B."/>
            <person name="Endler A."/>
            <person name="Grossmann J."/>
            <person name="Gruissem W."/>
            <person name="Baginsky S."/>
        </authorList>
    </citation>
    <scope>PHOSPHORYLATION [LARGE SCALE ANALYSIS] AT SER-39</scope>
    <scope>IDENTIFICATION BY MASS SPECTROMETRY [LARGE SCALE ANALYSIS]</scope>
</reference>
<reference key="15">
    <citation type="journal article" date="2014" name="Cell Host Microbe">
        <title>The FLS2-associated kinase BIK1 directly phosphorylates the NADPH oxidase RbohD to control plant immunity.</title>
        <authorList>
            <person name="Li L."/>
            <person name="Li M."/>
            <person name="Yu L."/>
            <person name="Zhou Z."/>
            <person name="Liang X."/>
            <person name="Liu Z."/>
            <person name="Cai G."/>
            <person name="Gao L."/>
            <person name="Zhang X."/>
            <person name="Wang Y."/>
            <person name="Chen S."/>
            <person name="Zhou J.M."/>
        </authorList>
    </citation>
    <scope>INTERACTION WITH BIK1 AND FLS2</scope>
    <scope>IDENTIFICATION BY MASS SPECTROMETRY</scope>
    <scope>PHOSPHORYLATION AT SER-39; SER-343 AND SER-347</scope>
</reference>
<reference key="16">
    <citation type="journal article" date="2015" name="Plant Physiol.">
        <title>PBL13 is a serine/threonine protein kinase that negatively regulates Arabidopsis immune responses.</title>
        <authorList>
            <person name="Lin Z.J."/>
            <person name="Liebrand T.W."/>
            <person name="Yadeta K.A."/>
            <person name="Coaker G."/>
        </authorList>
    </citation>
    <scope>INTERACTION WITH PBL13</scope>
</reference>
<reference key="17">
    <citation type="journal article" date="2018" name="Cell Host Microbe">
        <title>The MAP4 Kinase SIK1 Ensures Robust Extracellular ROS Burst and Antibacterial Immunity in Plants.</title>
        <authorList>
            <person name="Zhang M."/>
            <person name="Chiang Y.-H."/>
            <person name="Toruno T.Y."/>
            <person name="Lee D."/>
            <person name="Ma M."/>
            <person name="Liang X."/>
            <person name="Lal N.K."/>
            <person name="Lemos M."/>
            <person name="Lu Y.-J."/>
            <person name="Ma S."/>
            <person name="Liu J."/>
            <person name="Day B."/>
            <person name="Dinesh-Kumar S.P."/>
            <person name="Dehesh K."/>
            <person name="Dou D."/>
            <person name="Zhou J.-M."/>
            <person name="Coaker G."/>
        </authorList>
    </citation>
    <scope>FUNCTION</scope>
    <scope>INTERACTION WITH SIK1</scope>
    <scope>PTM</scope>
    <scope>PHOSPHORYLATION AT SER-8; SER-9; SER-339 AND SER-347</scope>
    <source>
        <strain>cv. Columbia</strain>
    </source>
</reference>
<feature type="chain" id="PRO_0000313756" description="Respiratory burst oxidase homolog protein D">
    <location>
        <begin position="1"/>
        <end position="921"/>
    </location>
</feature>
<feature type="topological domain" description="Cytoplasmic" evidence="2">
    <location>
        <begin position="1"/>
        <end position="376"/>
    </location>
</feature>
<feature type="transmembrane region" description="Helical; Name=1" evidence="2">
    <location>
        <begin position="377"/>
        <end position="397"/>
    </location>
</feature>
<feature type="topological domain" description="Extracellular" evidence="2">
    <location>
        <begin position="398"/>
        <end position="461"/>
    </location>
</feature>
<feature type="transmembrane region" description="Helical; Name=2" evidence="1">
    <location>
        <begin position="462"/>
        <end position="482"/>
    </location>
</feature>
<feature type="topological domain" description="Cytoplasmic" evidence="2">
    <location>
        <begin position="483"/>
        <end position="516"/>
    </location>
</feature>
<feature type="transmembrane region" description="Helical; Name=3" evidence="2">
    <location>
        <begin position="517"/>
        <end position="537"/>
    </location>
</feature>
<feature type="topological domain" description="Extracellular" evidence="2">
    <location>
        <begin position="538"/>
        <end position="559"/>
    </location>
</feature>
<feature type="transmembrane region" description="Helical; Name=4" evidence="2">
    <location>
        <begin position="560"/>
        <end position="580"/>
    </location>
</feature>
<feature type="topological domain" description="Cytoplasmic" evidence="2">
    <location>
        <begin position="581"/>
        <end position="588"/>
    </location>
</feature>
<feature type="transmembrane region" description="Helical; Name=5" evidence="1">
    <location>
        <begin position="589"/>
        <end position="606"/>
    </location>
</feature>
<feature type="topological domain" description="Extracellular" evidence="2">
    <location>
        <begin position="607"/>
        <end position="734"/>
    </location>
</feature>
<feature type="transmembrane region" description="Helical; Name=6" evidence="2">
    <location>
        <begin position="735"/>
        <end position="755"/>
    </location>
</feature>
<feature type="topological domain" description="Cytoplasmic" evidence="2">
    <location>
        <begin position="756"/>
        <end position="921"/>
    </location>
</feature>
<feature type="domain" description="EF-hand 1" evidence="3">
    <location>
        <begin position="253"/>
        <end position="288"/>
    </location>
</feature>
<feature type="domain" description="EF-hand 2" evidence="3">
    <location>
        <begin position="297"/>
        <end position="332"/>
    </location>
</feature>
<feature type="domain" description="Ferric oxidoreductase">
    <location>
        <begin position="415"/>
        <end position="572"/>
    </location>
</feature>
<feature type="domain" description="FAD-binding FR-type" evidence="4">
    <location>
        <begin position="611"/>
        <end position="732"/>
    </location>
</feature>
<feature type="region of interest" description="Disordered" evidence="5">
    <location>
        <begin position="1"/>
        <end position="71"/>
    </location>
</feature>
<feature type="region of interest" description="EF-hand-like 1" evidence="1">
    <location>
        <begin position="193"/>
        <end position="203"/>
    </location>
</feature>
<feature type="region of interest" description="EF-hand-like 2" evidence="1">
    <location>
        <begin position="230"/>
        <end position="241"/>
    </location>
</feature>
<feature type="compositionally biased region" description="Polar residues" evidence="5">
    <location>
        <begin position="21"/>
        <end position="31"/>
    </location>
</feature>
<feature type="compositionally biased region" description="Basic residues" evidence="5">
    <location>
        <begin position="44"/>
        <end position="53"/>
    </location>
</feature>
<feature type="binding site" evidence="3">
    <location>
        <position position="266"/>
    </location>
    <ligand>
        <name>Ca(2+)</name>
        <dbReference type="ChEBI" id="CHEBI:29108"/>
    </ligand>
</feature>
<feature type="binding site" evidence="3">
    <location>
        <position position="268"/>
    </location>
    <ligand>
        <name>Ca(2+)</name>
        <dbReference type="ChEBI" id="CHEBI:29108"/>
    </ligand>
</feature>
<feature type="binding site" evidence="3">
    <location>
        <position position="270"/>
    </location>
    <ligand>
        <name>Ca(2+)</name>
        <dbReference type="ChEBI" id="CHEBI:29108"/>
    </ligand>
</feature>
<feature type="binding site" evidence="3">
    <location>
        <position position="272"/>
    </location>
    <ligand>
        <name>Ca(2+)</name>
        <dbReference type="ChEBI" id="CHEBI:29108"/>
    </ligand>
</feature>
<feature type="binding site" evidence="3">
    <location>
        <position position="277"/>
    </location>
    <ligand>
        <name>Ca(2+)</name>
        <dbReference type="ChEBI" id="CHEBI:29108"/>
    </ligand>
</feature>
<feature type="modified residue" description="Phosphoserine" evidence="14">
    <location>
        <position position="8"/>
    </location>
</feature>
<feature type="modified residue" description="Phosphoserine" evidence="14">
    <location>
        <position position="9"/>
    </location>
</feature>
<feature type="modified residue" description="Phosphoserine" evidence="20">
    <location>
        <position position="26"/>
    </location>
</feature>
<feature type="modified residue" description="Phosphoserine" evidence="12 21 22">
    <location>
        <position position="39"/>
    </location>
</feature>
<feature type="modified residue" description="Phosphoserine" evidence="14">
    <location>
        <position position="339"/>
    </location>
</feature>
<feature type="modified residue" description="Phosphoserine" evidence="12 20">
    <location>
        <position position="343"/>
    </location>
</feature>
<feature type="modified residue" description="Phosphoserine" evidence="12 14 20">
    <location>
        <position position="347"/>
    </location>
</feature>
<gene>
    <name evidence="16" type="primary">RBOHD</name>
    <name evidence="18" type="ordered locus">At5g47910</name>
    <name evidence="19" type="ORF">MCA23.25</name>
</gene>
<dbReference type="EC" id="1.11.1.-"/>
<dbReference type="EC" id="1.6.3.-"/>
<dbReference type="EMBL" id="AF055357">
    <property type="protein sequence ID" value="AAC39479.1"/>
    <property type="molecule type" value="mRNA"/>
</dbReference>
<dbReference type="EMBL" id="AB016886">
    <property type="protein sequence ID" value="BAB11338.1"/>
    <property type="molecule type" value="Genomic_DNA"/>
</dbReference>
<dbReference type="EMBL" id="CP002688">
    <property type="protein sequence ID" value="AED95593.1"/>
    <property type="molecule type" value="Genomic_DNA"/>
</dbReference>
<dbReference type="EMBL" id="AF424625">
    <property type="protein sequence ID" value="AAL11618.1"/>
    <property type="molecule type" value="mRNA"/>
</dbReference>
<dbReference type="EMBL" id="BT002651">
    <property type="protein sequence ID" value="AAO11567.1"/>
    <property type="molecule type" value="mRNA"/>
</dbReference>
<dbReference type="PIR" id="T51804">
    <property type="entry name" value="T51804"/>
</dbReference>
<dbReference type="RefSeq" id="NP_199602.1">
    <property type="nucleotide sequence ID" value="NM_124165.3"/>
</dbReference>
<dbReference type="SMR" id="Q9FIJ0"/>
<dbReference type="BioGRID" id="20090">
    <property type="interactions" value="38"/>
</dbReference>
<dbReference type="FunCoup" id="Q9FIJ0">
    <property type="interactions" value="872"/>
</dbReference>
<dbReference type="IntAct" id="Q9FIJ0">
    <property type="interactions" value="34"/>
</dbReference>
<dbReference type="STRING" id="3702.Q9FIJ0"/>
<dbReference type="PeroxiBase" id="3286">
    <property type="entry name" value="AtRboh04"/>
</dbReference>
<dbReference type="GlyGen" id="Q9FIJ0">
    <property type="glycosylation" value="1 site"/>
</dbReference>
<dbReference type="iPTMnet" id="Q9FIJ0"/>
<dbReference type="PaxDb" id="3702-AT5G47910.1"/>
<dbReference type="ProteomicsDB" id="225974"/>
<dbReference type="EnsemblPlants" id="AT5G47910.1">
    <property type="protein sequence ID" value="AT5G47910.1"/>
    <property type="gene ID" value="AT5G47910"/>
</dbReference>
<dbReference type="GeneID" id="834842"/>
<dbReference type="Gramene" id="AT5G47910.1">
    <property type="protein sequence ID" value="AT5G47910.1"/>
    <property type="gene ID" value="AT5G47910"/>
</dbReference>
<dbReference type="KEGG" id="ath:AT5G47910"/>
<dbReference type="Araport" id="AT5G47910"/>
<dbReference type="TAIR" id="AT5G47910">
    <property type="gene designation" value="RBOHD"/>
</dbReference>
<dbReference type="eggNOG" id="KOG0039">
    <property type="taxonomic scope" value="Eukaryota"/>
</dbReference>
<dbReference type="HOGENOM" id="CLU_005646_6_0_1"/>
<dbReference type="InParanoid" id="Q9FIJ0"/>
<dbReference type="OMA" id="CSAYIWI"/>
<dbReference type="PhylomeDB" id="Q9FIJ0"/>
<dbReference type="BioCyc" id="ARA:AT5G47910-MONOMER"/>
<dbReference type="BRENDA" id="1.6.3.1">
    <property type="organism ID" value="399"/>
</dbReference>
<dbReference type="PRO" id="PR:Q9FIJ0"/>
<dbReference type="Proteomes" id="UP000006548">
    <property type="component" value="Chromosome 5"/>
</dbReference>
<dbReference type="ExpressionAtlas" id="Q9FIJ0">
    <property type="expression patterns" value="baseline and differential"/>
</dbReference>
<dbReference type="GO" id="GO:0005794">
    <property type="term" value="C:Golgi apparatus"/>
    <property type="evidence" value="ECO:0007005"/>
    <property type="project" value="TAIR"/>
</dbReference>
<dbReference type="GO" id="GO:0005886">
    <property type="term" value="C:plasma membrane"/>
    <property type="evidence" value="ECO:0007005"/>
    <property type="project" value="TAIR"/>
</dbReference>
<dbReference type="GO" id="GO:0009536">
    <property type="term" value="C:plastid"/>
    <property type="evidence" value="ECO:0007005"/>
    <property type="project" value="TAIR"/>
</dbReference>
<dbReference type="GO" id="GO:0005509">
    <property type="term" value="F:calcium ion binding"/>
    <property type="evidence" value="ECO:0007669"/>
    <property type="project" value="InterPro"/>
</dbReference>
<dbReference type="GO" id="GO:0016174">
    <property type="term" value="F:NAD(P)H oxidase H2O2-forming activity"/>
    <property type="evidence" value="ECO:0000315"/>
    <property type="project" value="TAIR"/>
</dbReference>
<dbReference type="GO" id="GO:0004601">
    <property type="term" value="F:peroxidase activity"/>
    <property type="evidence" value="ECO:0007669"/>
    <property type="project" value="UniProtKB-KW"/>
</dbReference>
<dbReference type="GO" id="GO:0033500">
    <property type="term" value="P:carbohydrate homeostasis"/>
    <property type="evidence" value="ECO:0000315"/>
    <property type="project" value="TAIR"/>
</dbReference>
<dbReference type="GO" id="GO:0071456">
    <property type="term" value="P:cellular response to hypoxia"/>
    <property type="evidence" value="ECO:0007007"/>
    <property type="project" value="TAIR"/>
</dbReference>
<dbReference type="GO" id="GO:0050832">
    <property type="term" value="P:defense response to fungus"/>
    <property type="evidence" value="ECO:0000315"/>
    <property type="project" value="TAIR"/>
</dbReference>
<dbReference type="GO" id="GO:0043069">
    <property type="term" value="P:negative regulation of programmed cell death"/>
    <property type="evidence" value="ECO:0000316"/>
    <property type="project" value="TAIR"/>
</dbReference>
<dbReference type="GO" id="GO:0007231">
    <property type="term" value="P:osmosensory signaling pathway"/>
    <property type="evidence" value="ECO:0000315"/>
    <property type="project" value="TAIR"/>
</dbReference>
<dbReference type="GO" id="GO:0072593">
    <property type="term" value="P:reactive oxygen species metabolic process"/>
    <property type="evidence" value="ECO:0000315"/>
    <property type="project" value="TAIR"/>
</dbReference>
<dbReference type="GO" id="GO:0009408">
    <property type="term" value="P:response to heat"/>
    <property type="evidence" value="ECO:0000315"/>
    <property type="project" value="TAIR"/>
</dbReference>
<dbReference type="GO" id="GO:0009611">
    <property type="term" value="P:response to wounding"/>
    <property type="evidence" value="ECO:0000270"/>
    <property type="project" value="TAIR"/>
</dbReference>
<dbReference type="CDD" id="cd00051">
    <property type="entry name" value="EFh"/>
    <property type="match status" value="1"/>
</dbReference>
<dbReference type="CDD" id="cd06186">
    <property type="entry name" value="NOX_Duox_like_FAD_NADP"/>
    <property type="match status" value="1"/>
</dbReference>
<dbReference type="FunFam" id="1.10.238.10:FF:000049">
    <property type="entry name" value="Respiratory burst oxidase homolog A"/>
    <property type="match status" value="1"/>
</dbReference>
<dbReference type="FunFam" id="2.40.30.10:FF:000019">
    <property type="entry name" value="Respiratory burst oxidase homolog A"/>
    <property type="match status" value="1"/>
</dbReference>
<dbReference type="FunFam" id="3.40.50.80:FF:000007">
    <property type="entry name" value="Respiratory burst oxidase protein A"/>
    <property type="match status" value="1"/>
</dbReference>
<dbReference type="Gene3D" id="1.10.238.10">
    <property type="entry name" value="EF-hand"/>
    <property type="match status" value="1"/>
</dbReference>
<dbReference type="Gene3D" id="3.40.50.80">
    <property type="entry name" value="Nucleotide-binding domain of ferredoxin-NADP reductase (FNR) module"/>
    <property type="match status" value="1"/>
</dbReference>
<dbReference type="Gene3D" id="2.40.30.10">
    <property type="entry name" value="Translation factors"/>
    <property type="match status" value="1"/>
</dbReference>
<dbReference type="InterPro" id="IPR000778">
    <property type="entry name" value="Cyt_b245_heavy_chain"/>
</dbReference>
<dbReference type="InterPro" id="IPR011992">
    <property type="entry name" value="EF-hand-dom_pair"/>
</dbReference>
<dbReference type="InterPro" id="IPR018247">
    <property type="entry name" value="EF_Hand_1_Ca_BS"/>
</dbReference>
<dbReference type="InterPro" id="IPR002048">
    <property type="entry name" value="EF_hand_dom"/>
</dbReference>
<dbReference type="InterPro" id="IPR013112">
    <property type="entry name" value="FAD-bd_8"/>
</dbReference>
<dbReference type="InterPro" id="IPR017927">
    <property type="entry name" value="FAD-bd_FR_type"/>
</dbReference>
<dbReference type="InterPro" id="IPR013130">
    <property type="entry name" value="Fe3_Rdtase_TM_dom"/>
</dbReference>
<dbReference type="InterPro" id="IPR013121">
    <property type="entry name" value="Fe_red_NAD-bd_6"/>
</dbReference>
<dbReference type="InterPro" id="IPR039261">
    <property type="entry name" value="FNR_nucleotide-bd"/>
</dbReference>
<dbReference type="InterPro" id="IPR013623">
    <property type="entry name" value="NADPH_Ox"/>
</dbReference>
<dbReference type="InterPro" id="IPR050369">
    <property type="entry name" value="RBOH/FRE"/>
</dbReference>
<dbReference type="InterPro" id="IPR017938">
    <property type="entry name" value="Riboflavin_synthase-like_b-brl"/>
</dbReference>
<dbReference type="PANTHER" id="PTHR11972">
    <property type="entry name" value="NADPH OXIDASE"/>
    <property type="match status" value="1"/>
</dbReference>
<dbReference type="PANTHER" id="PTHR11972:SF197">
    <property type="entry name" value="RESPIRATORY BURST OXIDASE HOMOLOG PROTEIN D"/>
    <property type="match status" value="1"/>
</dbReference>
<dbReference type="Pfam" id="PF08022">
    <property type="entry name" value="FAD_binding_8"/>
    <property type="match status" value="1"/>
</dbReference>
<dbReference type="Pfam" id="PF01794">
    <property type="entry name" value="Ferric_reduct"/>
    <property type="match status" value="1"/>
</dbReference>
<dbReference type="Pfam" id="PF08030">
    <property type="entry name" value="NAD_binding_6"/>
    <property type="match status" value="1"/>
</dbReference>
<dbReference type="Pfam" id="PF08414">
    <property type="entry name" value="NADPH_Ox"/>
    <property type="match status" value="1"/>
</dbReference>
<dbReference type="PRINTS" id="PR00466">
    <property type="entry name" value="GP91PHOX"/>
</dbReference>
<dbReference type="SFLD" id="SFLDS00052">
    <property type="entry name" value="Ferric_Reductase_Domain"/>
    <property type="match status" value="1"/>
</dbReference>
<dbReference type="SFLD" id="SFLDG01168">
    <property type="entry name" value="Ferric_reductase_subgroup_(FRE"/>
    <property type="match status" value="1"/>
</dbReference>
<dbReference type="SFLD" id="SFLDG01169">
    <property type="entry name" value="NADPH_oxidase_subgroup_(NOX)"/>
    <property type="match status" value="1"/>
</dbReference>
<dbReference type="SUPFAM" id="SSF47473">
    <property type="entry name" value="EF-hand"/>
    <property type="match status" value="1"/>
</dbReference>
<dbReference type="SUPFAM" id="SSF52343">
    <property type="entry name" value="Ferredoxin reductase-like, C-terminal NADP-linked domain"/>
    <property type="match status" value="1"/>
</dbReference>
<dbReference type="SUPFAM" id="SSF63380">
    <property type="entry name" value="Riboflavin synthase domain-like"/>
    <property type="match status" value="1"/>
</dbReference>
<dbReference type="PROSITE" id="PS00018">
    <property type="entry name" value="EF_HAND_1"/>
    <property type="match status" value="1"/>
</dbReference>
<dbReference type="PROSITE" id="PS50222">
    <property type="entry name" value="EF_HAND_2"/>
    <property type="match status" value="2"/>
</dbReference>
<dbReference type="PROSITE" id="PS51384">
    <property type="entry name" value="FAD_FR"/>
    <property type="match status" value="1"/>
</dbReference>
<comment type="function">
    <text evidence="6 7 8 9 10 11 14">Calcium-dependent NADPH oxidase that generates superoxide. Involved in the generation of reactive oxygen species (ROS) during incompatible interactions with pathogens, in response to pathogen-associated molecular pattern (PAMP)-triggered immunity (PTI) signaling and in UV-B and abscisic acid ROS-dependent signaling and via SIK1 mediated activation by phosphorylation (PubMed:30212650). Might be required for ROS signal amplification during light stress.</text>
</comment>
<comment type="activity regulation">
    <text evidence="11">Inhibited by diphenylene iodinium (DPI).</text>
</comment>
<comment type="subunit">
    <text evidence="1 12 13 14">Monomer and homodimer (By similarity). Interacts with BIK1 and FLS2 (PubMed:24629339). Interacts with PBL13 (PubMed:26432875). Binds to SIK1 upon flagellin perception and becomes activated by phosphorylation (PubMed:30212650).</text>
</comment>
<comment type="subcellular location">
    <subcellularLocation>
        <location evidence="2">Membrane</location>
        <topology evidence="2">Multi-pass membrane protein</topology>
    </subcellularLocation>
</comment>
<comment type="tissue specificity">
    <text evidence="7 15">More abundant in roots than in leaves, stems or inflorescences. Expressed in mesophyll and guard cells.</text>
</comment>
<comment type="induction">
    <text evidence="7 11">Up-regulated by pathogen infection and by abscisic acid.</text>
</comment>
<comment type="PTM">
    <text evidence="12 14">Phosphorylated at Ser-39, Ser-343 and Ser-347 by BIK1 upon flagellin (flg22) treatment (PubMed:24629339). Activated by phosphorylation at Ser-347 mediated by SIK1 and at Ser-8, Ser-9 and Ser-339 upon flagellin (e.g. flg22) perception (PubMed:30212650).</text>
</comment>
<comment type="disruption phenotype">
    <text evidence="8">Plants do not accumulate reactive oxygen species during disease-resistance reactions, do not up-regulate UV-B-dependent gene expression and are impaired in abscisic acid-induced stomatal closing and in root growth and seed germination inhibitions.</text>
</comment>
<comment type="similarity">
    <text evidence="17">Belongs to the RBOH (TC 5.B.1.3) family.</text>
</comment>
<proteinExistence type="evidence at protein level"/>
<protein>
    <recommendedName>
        <fullName evidence="16">Respiratory burst oxidase homolog protein D</fullName>
        <ecNumber>1.11.1.-</ecNumber>
        <ecNumber>1.6.3.-</ecNumber>
    </recommendedName>
    <alternativeName>
        <fullName evidence="16">NADPH oxidase RBOHD</fullName>
        <shortName evidence="16">AtRBOHD</shortName>
    </alternativeName>
</protein>
<name>RBOHD_ARATH</name>